<proteinExistence type="inferred from homology"/>
<accession>A1REC3</accession>
<protein>
    <recommendedName>
        <fullName evidence="1">Small ribosomal subunit protein uS17</fullName>
    </recommendedName>
    <alternativeName>
        <fullName evidence="2">30S ribosomal protein S17</fullName>
    </alternativeName>
</protein>
<organism>
    <name type="scientific">Shewanella sp. (strain W3-18-1)</name>
    <dbReference type="NCBI Taxonomy" id="351745"/>
    <lineage>
        <taxon>Bacteria</taxon>
        <taxon>Pseudomonadati</taxon>
        <taxon>Pseudomonadota</taxon>
        <taxon>Gammaproteobacteria</taxon>
        <taxon>Alteromonadales</taxon>
        <taxon>Shewanellaceae</taxon>
        <taxon>Shewanella</taxon>
    </lineage>
</organism>
<dbReference type="EMBL" id="CP000503">
    <property type="protein sequence ID" value="ABM23018.1"/>
    <property type="molecule type" value="Genomic_DNA"/>
</dbReference>
<dbReference type="RefSeq" id="WP_006083591.1">
    <property type="nucleotide sequence ID" value="NC_008750.1"/>
</dbReference>
<dbReference type="SMR" id="A1REC3"/>
<dbReference type="GeneID" id="67441769"/>
<dbReference type="KEGG" id="shw:Sputw3181_0165"/>
<dbReference type="HOGENOM" id="CLU_073626_1_1_6"/>
<dbReference type="Proteomes" id="UP000002597">
    <property type="component" value="Chromosome"/>
</dbReference>
<dbReference type="GO" id="GO:0022627">
    <property type="term" value="C:cytosolic small ribosomal subunit"/>
    <property type="evidence" value="ECO:0007669"/>
    <property type="project" value="TreeGrafter"/>
</dbReference>
<dbReference type="GO" id="GO:0019843">
    <property type="term" value="F:rRNA binding"/>
    <property type="evidence" value="ECO:0007669"/>
    <property type="project" value="UniProtKB-UniRule"/>
</dbReference>
<dbReference type="GO" id="GO:0003735">
    <property type="term" value="F:structural constituent of ribosome"/>
    <property type="evidence" value="ECO:0007669"/>
    <property type="project" value="InterPro"/>
</dbReference>
<dbReference type="GO" id="GO:0006412">
    <property type="term" value="P:translation"/>
    <property type="evidence" value="ECO:0007669"/>
    <property type="project" value="UniProtKB-UniRule"/>
</dbReference>
<dbReference type="CDD" id="cd00364">
    <property type="entry name" value="Ribosomal_uS17"/>
    <property type="match status" value="1"/>
</dbReference>
<dbReference type="FunFam" id="2.40.50.140:FF:000014">
    <property type="entry name" value="30S ribosomal protein S17"/>
    <property type="match status" value="1"/>
</dbReference>
<dbReference type="Gene3D" id="2.40.50.140">
    <property type="entry name" value="Nucleic acid-binding proteins"/>
    <property type="match status" value="1"/>
</dbReference>
<dbReference type="HAMAP" id="MF_01345_B">
    <property type="entry name" value="Ribosomal_uS17_B"/>
    <property type="match status" value="1"/>
</dbReference>
<dbReference type="InterPro" id="IPR012340">
    <property type="entry name" value="NA-bd_OB-fold"/>
</dbReference>
<dbReference type="InterPro" id="IPR000266">
    <property type="entry name" value="Ribosomal_uS17"/>
</dbReference>
<dbReference type="InterPro" id="IPR019984">
    <property type="entry name" value="Ribosomal_uS17_bact/chlr"/>
</dbReference>
<dbReference type="InterPro" id="IPR019979">
    <property type="entry name" value="Ribosomal_uS17_CS"/>
</dbReference>
<dbReference type="NCBIfam" id="NF004123">
    <property type="entry name" value="PRK05610.1"/>
    <property type="match status" value="1"/>
</dbReference>
<dbReference type="NCBIfam" id="TIGR03635">
    <property type="entry name" value="uS17_bact"/>
    <property type="match status" value="1"/>
</dbReference>
<dbReference type="PANTHER" id="PTHR10744">
    <property type="entry name" value="40S RIBOSOMAL PROTEIN S11 FAMILY MEMBER"/>
    <property type="match status" value="1"/>
</dbReference>
<dbReference type="PANTHER" id="PTHR10744:SF1">
    <property type="entry name" value="SMALL RIBOSOMAL SUBUNIT PROTEIN US17M"/>
    <property type="match status" value="1"/>
</dbReference>
<dbReference type="Pfam" id="PF00366">
    <property type="entry name" value="Ribosomal_S17"/>
    <property type="match status" value="1"/>
</dbReference>
<dbReference type="PRINTS" id="PR00973">
    <property type="entry name" value="RIBOSOMALS17"/>
</dbReference>
<dbReference type="SUPFAM" id="SSF50249">
    <property type="entry name" value="Nucleic acid-binding proteins"/>
    <property type="match status" value="1"/>
</dbReference>
<dbReference type="PROSITE" id="PS00056">
    <property type="entry name" value="RIBOSOMAL_S17"/>
    <property type="match status" value="1"/>
</dbReference>
<evidence type="ECO:0000255" key="1">
    <source>
        <dbReference type="HAMAP-Rule" id="MF_01345"/>
    </source>
</evidence>
<evidence type="ECO:0000305" key="2"/>
<keyword id="KW-0687">Ribonucleoprotein</keyword>
<keyword id="KW-0689">Ribosomal protein</keyword>
<keyword id="KW-0694">RNA-binding</keyword>
<keyword id="KW-0699">rRNA-binding</keyword>
<name>RS17_SHESW</name>
<reference key="1">
    <citation type="submission" date="2006-12" db="EMBL/GenBank/DDBJ databases">
        <title>Complete sequence of Shewanella sp. W3-18-1.</title>
        <authorList>
            <consortium name="US DOE Joint Genome Institute"/>
            <person name="Copeland A."/>
            <person name="Lucas S."/>
            <person name="Lapidus A."/>
            <person name="Barry K."/>
            <person name="Detter J.C."/>
            <person name="Glavina del Rio T."/>
            <person name="Hammon N."/>
            <person name="Israni S."/>
            <person name="Dalin E."/>
            <person name="Tice H."/>
            <person name="Pitluck S."/>
            <person name="Chain P."/>
            <person name="Malfatti S."/>
            <person name="Shin M."/>
            <person name="Vergez L."/>
            <person name="Schmutz J."/>
            <person name="Larimer F."/>
            <person name="Land M."/>
            <person name="Hauser L."/>
            <person name="Kyrpides N."/>
            <person name="Lykidis A."/>
            <person name="Tiedje J."/>
            <person name="Richardson P."/>
        </authorList>
    </citation>
    <scope>NUCLEOTIDE SEQUENCE [LARGE SCALE GENOMIC DNA]</scope>
    <source>
        <strain>W3-18-1</strain>
    </source>
</reference>
<comment type="function">
    <text evidence="1">One of the primary rRNA binding proteins, it binds specifically to the 5'-end of 16S ribosomal RNA.</text>
</comment>
<comment type="subunit">
    <text evidence="1">Part of the 30S ribosomal subunit.</text>
</comment>
<comment type="similarity">
    <text evidence="1">Belongs to the universal ribosomal protein uS17 family.</text>
</comment>
<gene>
    <name evidence="1" type="primary">rpsQ</name>
    <name type="ordered locus">Sputw3181_0165</name>
</gene>
<sequence length="82" mass="9382">MSDKIRTLQGRVTSNKMDKSITVAIERQVKHPIYGKYIKRTTKIHAHDETNQCNEGDLVAIRECRPLSKTKSWTLVEVVSKA</sequence>
<feature type="chain" id="PRO_1000055025" description="Small ribosomal subunit protein uS17">
    <location>
        <begin position="1"/>
        <end position="82"/>
    </location>
</feature>